<proteinExistence type="predicted"/>
<feature type="chain" id="PRO_0000116577" description="Uncharacterized protein C13G7.11">
    <location>
        <begin position="1"/>
        <end position="269"/>
    </location>
</feature>
<reference key="1">
    <citation type="journal article" date="2002" name="Nature">
        <title>The genome sequence of Schizosaccharomyces pombe.</title>
        <authorList>
            <person name="Wood V."/>
            <person name="Gwilliam R."/>
            <person name="Rajandream M.A."/>
            <person name="Lyne M.H."/>
            <person name="Lyne R."/>
            <person name="Stewart A."/>
            <person name="Sgouros J.G."/>
            <person name="Peat N."/>
            <person name="Hayles J."/>
            <person name="Baker S.G."/>
            <person name="Basham D."/>
            <person name="Bowman S."/>
            <person name="Brooks K."/>
            <person name="Brown D."/>
            <person name="Brown S."/>
            <person name="Chillingworth T."/>
            <person name="Churcher C.M."/>
            <person name="Collins M."/>
            <person name="Connor R."/>
            <person name="Cronin A."/>
            <person name="Davis P."/>
            <person name="Feltwell T."/>
            <person name="Fraser A."/>
            <person name="Gentles S."/>
            <person name="Goble A."/>
            <person name="Hamlin N."/>
            <person name="Harris D.E."/>
            <person name="Hidalgo J."/>
            <person name="Hodgson G."/>
            <person name="Holroyd S."/>
            <person name="Hornsby T."/>
            <person name="Howarth S."/>
            <person name="Huckle E.J."/>
            <person name="Hunt S."/>
            <person name="Jagels K."/>
            <person name="James K.D."/>
            <person name="Jones L."/>
            <person name="Jones M."/>
            <person name="Leather S."/>
            <person name="McDonald S."/>
            <person name="McLean J."/>
            <person name="Mooney P."/>
            <person name="Moule S."/>
            <person name="Mungall K.L."/>
            <person name="Murphy L.D."/>
            <person name="Niblett D."/>
            <person name="Odell C."/>
            <person name="Oliver K."/>
            <person name="O'Neil S."/>
            <person name="Pearson D."/>
            <person name="Quail M.A."/>
            <person name="Rabbinowitsch E."/>
            <person name="Rutherford K.M."/>
            <person name="Rutter S."/>
            <person name="Saunders D."/>
            <person name="Seeger K."/>
            <person name="Sharp S."/>
            <person name="Skelton J."/>
            <person name="Simmonds M.N."/>
            <person name="Squares R."/>
            <person name="Squares S."/>
            <person name="Stevens K."/>
            <person name="Taylor K."/>
            <person name="Taylor R.G."/>
            <person name="Tivey A."/>
            <person name="Walsh S.V."/>
            <person name="Warren T."/>
            <person name="Whitehead S."/>
            <person name="Woodward J.R."/>
            <person name="Volckaert G."/>
            <person name="Aert R."/>
            <person name="Robben J."/>
            <person name="Grymonprez B."/>
            <person name="Weltjens I."/>
            <person name="Vanstreels E."/>
            <person name="Rieger M."/>
            <person name="Schaefer M."/>
            <person name="Mueller-Auer S."/>
            <person name="Gabel C."/>
            <person name="Fuchs M."/>
            <person name="Duesterhoeft A."/>
            <person name="Fritzc C."/>
            <person name="Holzer E."/>
            <person name="Moestl D."/>
            <person name="Hilbert H."/>
            <person name="Borzym K."/>
            <person name="Langer I."/>
            <person name="Beck A."/>
            <person name="Lehrach H."/>
            <person name="Reinhardt R."/>
            <person name="Pohl T.M."/>
            <person name="Eger P."/>
            <person name="Zimmermann W."/>
            <person name="Wedler H."/>
            <person name="Wambutt R."/>
            <person name="Purnelle B."/>
            <person name="Goffeau A."/>
            <person name="Cadieu E."/>
            <person name="Dreano S."/>
            <person name="Gloux S."/>
            <person name="Lelaure V."/>
            <person name="Mottier S."/>
            <person name="Galibert F."/>
            <person name="Aves S.J."/>
            <person name="Xiang Z."/>
            <person name="Hunt C."/>
            <person name="Moore K."/>
            <person name="Hurst S.M."/>
            <person name="Lucas M."/>
            <person name="Rochet M."/>
            <person name="Gaillardin C."/>
            <person name="Tallada V.A."/>
            <person name="Garzon A."/>
            <person name="Thode G."/>
            <person name="Daga R.R."/>
            <person name="Cruzado L."/>
            <person name="Jimenez J."/>
            <person name="Sanchez M."/>
            <person name="del Rey F."/>
            <person name="Benito J."/>
            <person name="Dominguez A."/>
            <person name="Revuelta J.L."/>
            <person name="Moreno S."/>
            <person name="Armstrong J."/>
            <person name="Forsburg S.L."/>
            <person name="Cerutti L."/>
            <person name="Lowe T."/>
            <person name="McCombie W.R."/>
            <person name="Paulsen I."/>
            <person name="Potashkin J."/>
            <person name="Shpakovski G.V."/>
            <person name="Ussery D."/>
            <person name="Barrell B.G."/>
            <person name="Nurse P."/>
        </authorList>
    </citation>
    <scope>NUCLEOTIDE SEQUENCE [LARGE SCALE GENOMIC DNA]</scope>
    <source>
        <strain>972 / ATCC 24843</strain>
    </source>
</reference>
<protein>
    <recommendedName>
        <fullName>Uncharacterized protein C13G7.11</fullName>
    </recommendedName>
</protein>
<accession>Q10275</accession>
<sequence>MNVLRTQKYWVNQFAINFACRNTYVNPMFLRYFHCAVPRAISQRALKPMDIPFLQCYIEPIDNTSFFLHPFKKIRFWWRYLFYGWWNLKKNQFLIKRTFPDRDFSIAEIIQNALKLHSGVNKALANHDLQQLEELCTLRTAQILKQQALNQPKCIWKLEKHISKPKLLNLSRAQADLKGEEFFVQAVVRLHTLQSLRTDKGSPKIEKPDIENVVIQQRSWTSPIRWQLWGSVPSTPVNTVRKTLPDGQVTFVAKPSKKSFLKQLFSGKE</sequence>
<gene>
    <name type="ORF">SPAC13G7.11</name>
</gene>
<keyword id="KW-1185">Reference proteome</keyword>
<dbReference type="EMBL" id="CU329670">
    <property type="protein sequence ID" value="CAA93599.2"/>
    <property type="molecule type" value="Genomic_DNA"/>
</dbReference>
<dbReference type="PIR" id="S67440">
    <property type="entry name" value="S67440"/>
</dbReference>
<dbReference type="PIR" id="T37661">
    <property type="entry name" value="T37661"/>
</dbReference>
<dbReference type="SMR" id="Q10275"/>
<dbReference type="BioGRID" id="279284">
    <property type="interactions" value="15"/>
</dbReference>
<dbReference type="FunCoup" id="Q10275">
    <property type="interactions" value="37"/>
</dbReference>
<dbReference type="STRING" id="284812.Q10275"/>
<dbReference type="iPTMnet" id="Q10275"/>
<dbReference type="PaxDb" id="4896-SPAC13G7.11.1"/>
<dbReference type="EnsemblFungi" id="SPAC13G7.11.1">
    <property type="protein sequence ID" value="SPAC13G7.11.1:pep"/>
    <property type="gene ID" value="SPAC13G7.11"/>
</dbReference>
<dbReference type="KEGG" id="spo:2542838"/>
<dbReference type="PomBase" id="SPAC13G7.11"/>
<dbReference type="VEuPathDB" id="FungiDB:SPAC13G7.11"/>
<dbReference type="eggNOG" id="ENOG502SAXJ">
    <property type="taxonomic scope" value="Eukaryota"/>
</dbReference>
<dbReference type="HOGENOM" id="CLU_088020_0_0_1"/>
<dbReference type="InParanoid" id="Q10275"/>
<dbReference type="OMA" id="CAQADMQ"/>
<dbReference type="PRO" id="PR:Q10275"/>
<dbReference type="Proteomes" id="UP000002485">
    <property type="component" value="Chromosome I"/>
</dbReference>
<dbReference type="GO" id="GO:0005829">
    <property type="term" value="C:cytosol"/>
    <property type="evidence" value="ECO:0007005"/>
    <property type="project" value="PomBase"/>
</dbReference>
<dbReference type="GO" id="GO:0005743">
    <property type="term" value="C:mitochondrial inner membrane"/>
    <property type="evidence" value="ECO:0000318"/>
    <property type="project" value="GO_Central"/>
</dbReference>
<dbReference type="GO" id="GO:0005634">
    <property type="term" value="C:nucleus"/>
    <property type="evidence" value="ECO:0007005"/>
    <property type="project" value="PomBase"/>
</dbReference>
<dbReference type="GO" id="GO:0043022">
    <property type="term" value="F:ribosome binding"/>
    <property type="evidence" value="ECO:0000318"/>
    <property type="project" value="GO_Central"/>
</dbReference>
<dbReference type="GO" id="GO:0032979">
    <property type="term" value="P:protein insertion into mitochondrial inner membrane from matrix"/>
    <property type="evidence" value="ECO:0000318"/>
    <property type="project" value="GO_Central"/>
</dbReference>
<dbReference type="Gene3D" id="3.10.450.240">
    <property type="match status" value="1"/>
</dbReference>
<dbReference type="InterPro" id="IPR024621">
    <property type="entry name" value="Mba1"/>
</dbReference>
<dbReference type="PANTHER" id="PTHR13333">
    <property type="entry name" value="M-AAA PROTEASE-INTERACTING PROTEIN 1, MITOCHONDRIAL"/>
    <property type="match status" value="1"/>
</dbReference>
<dbReference type="PANTHER" id="PTHR13333:SF5">
    <property type="entry name" value="M-AAA PROTEASE-INTERACTING PROTEIN 1, MITOCHONDRIAL"/>
    <property type="match status" value="1"/>
</dbReference>
<dbReference type="Pfam" id="PF07961">
    <property type="entry name" value="MBA1"/>
    <property type="match status" value="1"/>
</dbReference>
<name>YD3B_SCHPO</name>
<organism>
    <name type="scientific">Schizosaccharomyces pombe (strain 972 / ATCC 24843)</name>
    <name type="common">Fission yeast</name>
    <dbReference type="NCBI Taxonomy" id="284812"/>
    <lineage>
        <taxon>Eukaryota</taxon>
        <taxon>Fungi</taxon>
        <taxon>Dikarya</taxon>
        <taxon>Ascomycota</taxon>
        <taxon>Taphrinomycotina</taxon>
        <taxon>Schizosaccharomycetes</taxon>
        <taxon>Schizosaccharomycetales</taxon>
        <taxon>Schizosaccharomycetaceae</taxon>
        <taxon>Schizosaccharomyces</taxon>
    </lineage>
</organism>